<geneLocation type="plasmid">
    <name>pHY30</name>
</geneLocation>
<proteinExistence type="inferred from homology"/>
<accession>Q10419</accession>
<name>MESE_LEUME</name>
<comment type="function">
    <text>Involved in the secretion of mesentericin Y105.</text>
</comment>
<comment type="subcellular location">
    <subcellularLocation>
        <location evidence="2">Membrane</location>
        <topology evidence="2">Single-pass membrane protein</topology>
    </subcellularLocation>
</comment>
<comment type="similarity">
    <text evidence="2">Belongs to the membrane fusion protein (MFP) (TC 8.A.1) family.</text>
</comment>
<evidence type="ECO:0000255" key="1"/>
<evidence type="ECO:0000305" key="2"/>
<reference key="1">
    <citation type="journal article" date="1995" name="Microbiology">
        <title>Mesentericin Y105 gene clusters in Leuconostoc mesenteroides Y105.</title>
        <authorList>
            <person name="Fremaux C."/>
            <person name="Hechard A."/>
            <person name="Cenatiempo Y."/>
        </authorList>
    </citation>
    <scope>NUCLEOTIDE SEQUENCE [GENOMIC DNA]</scope>
    <source>
        <strain>Y105</strain>
    </source>
</reference>
<protein>
    <recommendedName>
        <fullName>Mesentericin Y105 secretion protein MesE</fullName>
    </recommendedName>
</protein>
<gene>
    <name type="primary">mesE</name>
</gene>
<sequence>MFDPKYLESGEFYQRRYRNFPTLIIVPIFLLVVFIVLFSLFAKREIVVKASGEIIPAKVLSDIQSTSNNAIDSNQLAENKMVKKGDTLVTFTSGNEKISSQLLTQQINNLNNRIQSLDTYKHSIIDGRSEFGGTDQFGYDNLFNGYMAQVDTLTSEFNQQNSDKQTADQQANHQIDVLKQGQSKNNQQLANYQAILTSINSNTKPTNNPYQSIYDNYAAQLKSAQTTDDKEQVKQTALSSVQQQIDQLQTTSSSYDSQIAGITKSGPLSQSSTLDKIADLKQQQLASAQKEINDQQQSLDELKAKQSSANEDYQDTVIKAPESGILHLTSDKATIKYFPKGTTVTQIYPMLNKRTKLSVEYYVPTSNSVGLKRGQNIRFVANQNVTKPLILTGTIKTISSAPIIIKEESFYKCIASINVNVREHEQIKYGLAGKVTTTKGTKTWFNYYKDILLGNTN</sequence>
<feature type="chain" id="PRO_0000201887" description="Mesentericin Y105 secretion protein MesE">
    <location>
        <begin position="1"/>
        <end position="457"/>
    </location>
</feature>
<feature type="transmembrane region" description="Helical" evidence="1">
    <location>
        <begin position="22"/>
        <end position="42"/>
    </location>
</feature>
<organism>
    <name type="scientific">Leuconostoc mesenteroides</name>
    <dbReference type="NCBI Taxonomy" id="1245"/>
    <lineage>
        <taxon>Bacteria</taxon>
        <taxon>Bacillati</taxon>
        <taxon>Bacillota</taxon>
        <taxon>Bacilli</taxon>
        <taxon>Lactobacillales</taxon>
        <taxon>Lactobacillaceae</taxon>
        <taxon>Leuconostoc</taxon>
    </lineage>
</organism>
<dbReference type="EMBL" id="X81803">
    <property type="protein sequence ID" value="CAA57403.1"/>
    <property type="molecule type" value="Genomic_DNA"/>
</dbReference>
<dbReference type="PIR" id="S52206">
    <property type="entry name" value="S52206"/>
</dbReference>
<dbReference type="SMR" id="Q10419"/>
<dbReference type="TCDB" id="8.A.1.4.1">
    <property type="family name" value="the membrane fusion protein (mfp) family"/>
</dbReference>
<dbReference type="GO" id="GO:0016020">
    <property type="term" value="C:membrane"/>
    <property type="evidence" value="ECO:0007669"/>
    <property type="project" value="UniProtKB-SubCell"/>
</dbReference>
<dbReference type="GO" id="GO:0043213">
    <property type="term" value="P:bacteriocin transport"/>
    <property type="evidence" value="ECO:0007669"/>
    <property type="project" value="UniProtKB-KW"/>
</dbReference>
<dbReference type="GO" id="GO:0009306">
    <property type="term" value="P:protein secretion"/>
    <property type="evidence" value="ECO:0007669"/>
    <property type="project" value="InterPro"/>
</dbReference>
<dbReference type="InterPro" id="IPR005696">
    <property type="entry name" value="MesE/LcnD"/>
</dbReference>
<dbReference type="InterPro" id="IPR050739">
    <property type="entry name" value="MFP"/>
</dbReference>
<dbReference type="InterPro" id="IPR006144">
    <property type="entry name" value="Secretion_HlyD_CS"/>
</dbReference>
<dbReference type="NCBIfam" id="TIGR01000">
    <property type="entry name" value="bacteriocin_acc"/>
    <property type="match status" value="1"/>
</dbReference>
<dbReference type="PANTHER" id="PTHR30386">
    <property type="entry name" value="MEMBRANE FUSION SUBUNIT OF EMRAB-TOLC MULTIDRUG EFFLUX PUMP"/>
    <property type="match status" value="1"/>
</dbReference>
<dbReference type="PANTHER" id="PTHR30386:SF26">
    <property type="entry name" value="TRANSPORT PROTEIN COMB"/>
    <property type="match status" value="1"/>
</dbReference>
<dbReference type="PROSITE" id="PS00543">
    <property type="entry name" value="HLYD_FAMILY"/>
    <property type="match status" value="1"/>
</dbReference>
<keyword id="KW-0080">Bacteriocin transport</keyword>
<keyword id="KW-0472">Membrane</keyword>
<keyword id="KW-0614">Plasmid</keyword>
<keyword id="KW-0653">Protein transport</keyword>
<keyword id="KW-0812">Transmembrane</keyword>
<keyword id="KW-1133">Transmembrane helix</keyword>
<keyword id="KW-0813">Transport</keyword>